<reference key="1">
    <citation type="journal article" date="2007" name="BMC Genomics">
        <title>The full-ORF clone resource of the German cDNA consortium.</title>
        <authorList>
            <person name="Bechtel S."/>
            <person name="Rosenfelder H."/>
            <person name="Duda A."/>
            <person name="Schmidt C.P."/>
            <person name="Ernst U."/>
            <person name="Wellenreuther R."/>
            <person name="Mehrle A."/>
            <person name="Schuster C."/>
            <person name="Bahr A."/>
            <person name="Bloecker H."/>
            <person name="Heubner D."/>
            <person name="Hoerlein A."/>
            <person name="Michel G."/>
            <person name="Wedler H."/>
            <person name="Koehrer K."/>
            <person name="Ottenwaelder B."/>
            <person name="Poustka A."/>
            <person name="Wiemann S."/>
            <person name="Schupp I."/>
        </authorList>
    </citation>
    <scope>NUCLEOTIDE SEQUENCE [LARGE SCALE MRNA] (ISOFORM 2)</scope>
    <scope>VARIANT PRO-179</scope>
    <source>
        <tissue>Prostate</tissue>
        <tissue>Retina</tissue>
    </source>
</reference>
<reference key="2">
    <citation type="journal article" date="2005" name="Nature">
        <title>The DNA sequence of the human X chromosome.</title>
        <authorList>
            <person name="Ross M.T."/>
            <person name="Grafham D.V."/>
            <person name="Coffey A.J."/>
            <person name="Scherer S."/>
            <person name="McLay K."/>
            <person name="Muzny D."/>
            <person name="Platzer M."/>
            <person name="Howell G.R."/>
            <person name="Burrows C."/>
            <person name="Bird C.P."/>
            <person name="Frankish A."/>
            <person name="Lovell F.L."/>
            <person name="Howe K.L."/>
            <person name="Ashurst J.L."/>
            <person name="Fulton R.S."/>
            <person name="Sudbrak R."/>
            <person name="Wen G."/>
            <person name="Jones M.C."/>
            <person name="Hurles M.E."/>
            <person name="Andrews T.D."/>
            <person name="Scott C.E."/>
            <person name="Searle S."/>
            <person name="Ramser J."/>
            <person name="Whittaker A."/>
            <person name="Deadman R."/>
            <person name="Carter N.P."/>
            <person name="Hunt S.E."/>
            <person name="Chen R."/>
            <person name="Cree A."/>
            <person name="Gunaratne P."/>
            <person name="Havlak P."/>
            <person name="Hodgson A."/>
            <person name="Metzker M.L."/>
            <person name="Richards S."/>
            <person name="Scott G."/>
            <person name="Steffen D."/>
            <person name="Sodergren E."/>
            <person name="Wheeler D.A."/>
            <person name="Worley K.C."/>
            <person name="Ainscough R."/>
            <person name="Ambrose K.D."/>
            <person name="Ansari-Lari M.A."/>
            <person name="Aradhya S."/>
            <person name="Ashwell R.I."/>
            <person name="Babbage A.K."/>
            <person name="Bagguley C.L."/>
            <person name="Ballabio A."/>
            <person name="Banerjee R."/>
            <person name="Barker G.E."/>
            <person name="Barlow K.F."/>
            <person name="Barrett I.P."/>
            <person name="Bates K.N."/>
            <person name="Beare D.M."/>
            <person name="Beasley H."/>
            <person name="Beasley O."/>
            <person name="Beck A."/>
            <person name="Bethel G."/>
            <person name="Blechschmidt K."/>
            <person name="Brady N."/>
            <person name="Bray-Allen S."/>
            <person name="Bridgeman A.M."/>
            <person name="Brown A.J."/>
            <person name="Brown M.J."/>
            <person name="Bonnin D."/>
            <person name="Bruford E.A."/>
            <person name="Buhay C."/>
            <person name="Burch P."/>
            <person name="Burford D."/>
            <person name="Burgess J."/>
            <person name="Burrill W."/>
            <person name="Burton J."/>
            <person name="Bye J.M."/>
            <person name="Carder C."/>
            <person name="Carrel L."/>
            <person name="Chako J."/>
            <person name="Chapman J.C."/>
            <person name="Chavez D."/>
            <person name="Chen E."/>
            <person name="Chen G."/>
            <person name="Chen Y."/>
            <person name="Chen Z."/>
            <person name="Chinault C."/>
            <person name="Ciccodicola A."/>
            <person name="Clark S.Y."/>
            <person name="Clarke G."/>
            <person name="Clee C.M."/>
            <person name="Clegg S."/>
            <person name="Clerc-Blankenburg K."/>
            <person name="Clifford K."/>
            <person name="Cobley V."/>
            <person name="Cole C.G."/>
            <person name="Conquer J.S."/>
            <person name="Corby N."/>
            <person name="Connor R.E."/>
            <person name="David R."/>
            <person name="Davies J."/>
            <person name="Davis C."/>
            <person name="Davis J."/>
            <person name="Delgado O."/>
            <person name="Deshazo D."/>
            <person name="Dhami P."/>
            <person name="Ding Y."/>
            <person name="Dinh H."/>
            <person name="Dodsworth S."/>
            <person name="Draper H."/>
            <person name="Dugan-Rocha S."/>
            <person name="Dunham A."/>
            <person name="Dunn M."/>
            <person name="Durbin K.J."/>
            <person name="Dutta I."/>
            <person name="Eades T."/>
            <person name="Ellwood M."/>
            <person name="Emery-Cohen A."/>
            <person name="Errington H."/>
            <person name="Evans K.L."/>
            <person name="Faulkner L."/>
            <person name="Francis F."/>
            <person name="Frankland J."/>
            <person name="Fraser A.E."/>
            <person name="Galgoczy P."/>
            <person name="Gilbert J."/>
            <person name="Gill R."/>
            <person name="Gloeckner G."/>
            <person name="Gregory S.G."/>
            <person name="Gribble S."/>
            <person name="Griffiths C."/>
            <person name="Grocock R."/>
            <person name="Gu Y."/>
            <person name="Gwilliam R."/>
            <person name="Hamilton C."/>
            <person name="Hart E.A."/>
            <person name="Hawes A."/>
            <person name="Heath P.D."/>
            <person name="Heitmann K."/>
            <person name="Hennig S."/>
            <person name="Hernandez J."/>
            <person name="Hinzmann B."/>
            <person name="Ho S."/>
            <person name="Hoffs M."/>
            <person name="Howden P.J."/>
            <person name="Huckle E.J."/>
            <person name="Hume J."/>
            <person name="Hunt P.J."/>
            <person name="Hunt A.R."/>
            <person name="Isherwood J."/>
            <person name="Jacob L."/>
            <person name="Johnson D."/>
            <person name="Jones S."/>
            <person name="de Jong P.J."/>
            <person name="Joseph S.S."/>
            <person name="Keenan S."/>
            <person name="Kelly S."/>
            <person name="Kershaw J.K."/>
            <person name="Khan Z."/>
            <person name="Kioschis P."/>
            <person name="Klages S."/>
            <person name="Knights A.J."/>
            <person name="Kosiura A."/>
            <person name="Kovar-Smith C."/>
            <person name="Laird G.K."/>
            <person name="Langford C."/>
            <person name="Lawlor S."/>
            <person name="Leversha M."/>
            <person name="Lewis L."/>
            <person name="Liu W."/>
            <person name="Lloyd C."/>
            <person name="Lloyd D.M."/>
            <person name="Loulseged H."/>
            <person name="Loveland J.E."/>
            <person name="Lovell J.D."/>
            <person name="Lozado R."/>
            <person name="Lu J."/>
            <person name="Lyne R."/>
            <person name="Ma J."/>
            <person name="Maheshwari M."/>
            <person name="Matthews L.H."/>
            <person name="McDowall J."/>
            <person name="McLaren S."/>
            <person name="McMurray A."/>
            <person name="Meidl P."/>
            <person name="Meitinger T."/>
            <person name="Milne S."/>
            <person name="Miner G."/>
            <person name="Mistry S.L."/>
            <person name="Morgan M."/>
            <person name="Morris S."/>
            <person name="Mueller I."/>
            <person name="Mullikin J.C."/>
            <person name="Nguyen N."/>
            <person name="Nordsiek G."/>
            <person name="Nyakatura G."/>
            <person name="O'dell C.N."/>
            <person name="Okwuonu G."/>
            <person name="Palmer S."/>
            <person name="Pandian R."/>
            <person name="Parker D."/>
            <person name="Parrish J."/>
            <person name="Pasternak S."/>
            <person name="Patel D."/>
            <person name="Pearce A.V."/>
            <person name="Pearson D.M."/>
            <person name="Pelan S.E."/>
            <person name="Perez L."/>
            <person name="Porter K.M."/>
            <person name="Ramsey Y."/>
            <person name="Reichwald K."/>
            <person name="Rhodes S."/>
            <person name="Ridler K.A."/>
            <person name="Schlessinger D."/>
            <person name="Schueler M.G."/>
            <person name="Sehra H.K."/>
            <person name="Shaw-Smith C."/>
            <person name="Shen H."/>
            <person name="Sheridan E.M."/>
            <person name="Shownkeen R."/>
            <person name="Skuce C.D."/>
            <person name="Smith M.L."/>
            <person name="Sotheran E.C."/>
            <person name="Steingruber H.E."/>
            <person name="Steward C.A."/>
            <person name="Storey R."/>
            <person name="Swann R.M."/>
            <person name="Swarbreck D."/>
            <person name="Tabor P.E."/>
            <person name="Taudien S."/>
            <person name="Taylor T."/>
            <person name="Teague B."/>
            <person name="Thomas K."/>
            <person name="Thorpe A."/>
            <person name="Timms K."/>
            <person name="Tracey A."/>
            <person name="Trevanion S."/>
            <person name="Tromans A.C."/>
            <person name="d'Urso M."/>
            <person name="Verduzco D."/>
            <person name="Villasana D."/>
            <person name="Waldron L."/>
            <person name="Wall M."/>
            <person name="Wang Q."/>
            <person name="Warren J."/>
            <person name="Warry G.L."/>
            <person name="Wei X."/>
            <person name="West A."/>
            <person name="Whitehead S.L."/>
            <person name="Whiteley M.N."/>
            <person name="Wilkinson J.E."/>
            <person name="Willey D.L."/>
            <person name="Williams G."/>
            <person name="Williams L."/>
            <person name="Williamson A."/>
            <person name="Williamson H."/>
            <person name="Wilming L."/>
            <person name="Woodmansey R.L."/>
            <person name="Wray P.W."/>
            <person name="Yen J."/>
            <person name="Zhang J."/>
            <person name="Zhou J."/>
            <person name="Zoghbi H."/>
            <person name="Zorilla S."/>
            <person name="Buck D."/>
            <person name="Reinhardt R."/>
            <person name="Poustka A."/>
            <person name="Rosenthal A."/>
            <person name="Lehrach H."/>
            <person name="Meindl A."/>
            <person name="Minx P.J."/>
            <person name="Hillier L.W."/>
            <person name="Willard H.F."/>
            <person name="Wilson R.K."/>
            <person name="Waterston R.H."/>
            <person name="Rice C.M."/>
            <person name="Vaudin M."/>
            <person name="Coulson A."/>
            <person name="Nelson D.L."/>
            <person name="Weinstock G."/>
            <person name="Sulston J.E."/>
            <person name="Durbin R.M."/>
            <person name="Hubbard T."/>
            <person name="Gibbs R.A."/>
            <person name="Beck S."/>
            <person name="Rogers J."/>
            <person name="Bentley D.R."/>
        </authorList>
    </citation>
    <scope>NUCLEOTIDE SEQUENCE [LARGE SCALE GENOMIC DNA]</scope>
</reference>
<reference key="3">
    <citation type="journal article" date="2004" name="Genome Res.">
        <title>The status, quality, and expansion of the NIH full-length cDNA project: the Mammalian Gene Collection (MGC).</title>
        <authorList>
            <consortium name="The MGC Project Team"/>
        </authorList>
    </citation>
    <scope>NUCLEOTIDE SEQUENCE [LARGE SCALE MRNA] (ISOFORM 1)</scope>
    <scope>VARIANT PRO-179</scope>
    <source>
        <tissue>Brain</tissue>
        <tissue>Muscle</tissue>
    </source>
</reference>
<reference key="4">
    <citation type="journal article" date="1999" name="DNA Res.">
        <title>Characterization of cDNA clones selected by the GeneMark analysis from size-fractionated cDNA libraries from human brain.</title>
        <authorList>
            <person name="Hirosawa M."/>
            <person name="Nagase T."/>
            <person name="Ishikawa K."/>
            <person name="Kikuno R."/>
            <person name="Nomura N."/>
            <person name="Ohara O."/>
        </authorList>
    </citation>
    <scope>NUCLEOTIDE SEQUENCE [LARGE SCALE MRNA] OF 8-841 (ISOFORM 1)</scope>
    <scope>VARIANT PRO-179</scope>
    <source>
        <tissue>Brain</tissue>
    </source>
</reference>
<reference key="5">
    <citation type="submission" date="2008-12" db="UniProtKB">
        <authorList>
            <person name="Lubec G."/>
            <person name="Chen W.-Q."/>
            <person name="Sun Y."/>
        </authorList>
    </citation>
    <scope>PROTEIN SEQUENCE OF 401-412</scope>
    <scope>IDENTIFICATION BY MASS SPECTROMETRY</scope>
    <source>
        <tissue>Fetal brain cortex</tissue>
    </source>
</reference>
<reference key="6">
    <citation type="journal article" date="2000" name="Nucleic Acids Res.">
        <title>By-passing selection: direct screening for antibody-antigen interactions using protein arrays.</title>
        <authorList>
            <person name="Holt L.J."/>
            <person name="Bussow K."/>
            <person name="Walter G."/>
            <person name="Tomlinson I.M."/>
        </authorList>
    </citation>
    <scope>NUCLEOTIDE SEQUENCE [MRNA] OF 677-841</scope>
    <source>
        <tissue>Fetal brain</tissue>
    </source>
</reference>
<reference key="7">
    <citation type="journal article" date="2005" name="Clin. Immunol.">
        <title>Identification of GRASP-1 as a novel 97 kDa autoantigen localized to endosomes.</title>
        <authorList>
            <person name="Stinton L.M."/>
            <person name="Selak S."/>
            <person name="Fritzler M.J."/>
        </authorList>
    </citation>
    <scope>SUBCELLULAR LOCATION</scope>
    <scope>ROLE IN RAYNAUD SYNDROME</scope>
</reference>
<reference key="8">
    <citation type="journal article" date="2006" name="Cell">
        <title>Global, in vivo, and site-specific phosphorylation dynamics in signaling networks.</title>
        <authorList>
            <person name="Olsen J.V."/>
            <person name="Blagoev B."/>
            <person name="Gnad F."/>
            <person name="Macek B."/>
            <person name="Kumar C."/>
            <person name="Mortensen P."/>
            <person name="Mann M."/>
        </authorList>
    </citation>
    <scope>IDENTIFICATION BY MASS SPECTROMETRY [LARGE SCALE ANALYSIS]</scope>
    <source>
        <tissue>Cervix carcinoma</tissue>
    </source>
</reference>
<reference key="9">
    <citation type="journal article" date="2007" name="FEBS Lett.">
        <title>GRASP-1 is a neuronal scaffold protein for the JNK signaling pathway.</title>
        <authorList>
            <person name="Ye B."/>
            <person name="Yu W.P."/>
            <person name="Thomas G.M."/>
            <person name="Huganir R.L."/>
        </authorList>
    </citation>
    <scope>FUNCTION</scope>
    <scope>INTERACTION WITH MAPK8 AND MAP3K1</scope>
</reference>
<reference key="10">
    <citation type="journal article" date="2008" name="J. Proteome Res.">
        <title>Combining protein-based IMAC, peptide-based IMAC, and MudPIT for efficient phosphoproteomic analysis.</title>
        <authorList>
            <person name="Cantin G.T."/>
            <person name="Yi W."/>
            <person name="Lu B."/>
            <person name="Park S.K."/>
            <person name="Xu T."/>
            <person name="Lee J.-D."/>
            <person name="Yates J.R. III"/>
        </authorList>
    </citation>
    <scope>IDENTIFICATION BY MASS SPECTROMETRY [LARGE SCALE ANALYSIS]</scope>
    <source>
        <tissue>Cervix carcinoma</tissue>
    </source>
</reference>
<reference key="11">
    <citation type="journal article" date="2008" name="Proc. Natl. Acad. Sci. U.S.A.">
        <title>A quantitative atlas of mitotic phosphorylation.</title>
        <authorList>
            <person name="Dephoure N."/>
            <person name="Zhou C."/>
            <person name="Villen J."/>
            <person name="Beausoleil S.A."/>
            <person name="Bakalarski C.E."/>
            <person name="Elledge S.J."/>
            <person name="Gygi S.P."/>
        </authorList>
    </citation>
    <scope>PHOSPHORYLATION [LARGE SCALE ANALYSIS] AT SER-655</scope>
    <scope>IDENTIFICATION BY MASS SPECTROMETRY [LARGE SCALE ANALYSIS]</scope>
    <source>
        <tissue>Cervix carcinoma</tissue>
    </source>
</reference>
<reference key="12">
    <citation type="journal article" date="2009" name="Sci. Signal.">
        <title>Quantitative phosphoproteomic analysis of T cell receptor signaling reveals system-wide modulation of protein-protein interactions.</title>
        <authorList>
            <person name="Mayya V."/>
            <person name="Lundgren D.H."/>
            <person name="Hwang S.-I."/>
            <person name="Rezaul K."/>
            <person name="Wu L."/>
            <person name="Eng J.K."/>
            <person name="Rodionov V."/>
            <person name="Han D.K."/>
        </authorList>
    </citation>
    <scope>PHOSPHORYLATION [LARGE SCALE ANALYSIS] AT SER-666; SER-690 AND SER-692</scope>
    <scope>IDENTIFICATION BY MASS SPECTROMETRY [LARGE SCALE ANALYSIS]</scope>
    <source>
        <tissue>Leukemic T-cell</tissue>
    </source>
</reference>
<reference key="13">
    <citation type="journal article" date="2010" name="PLoS Biol.">
        <title>Neuron specific Rab4 effector GRASP-1 coordinates membrane specialization and maturation of recycling endosomes.</title>
        <authorList>
            <person name="Hoogenraad C.C."/>
            <person name="Popa I."/>
            <person name="Futai K."/>
            <person name="Martinez-Sanchez E."/>
            <person name="Sanchez-Martinez E."/>
            <person name="Wulf P.S."/>
            <person name="van Vlijmen T."/>
            <person name="Dortland B.R."/>
            <person name="Oorschot V."/>
            <person name="Govers R."/>
            <person name="Monti M."/>
            <person name="Heck A.J."/>
            <person name="Sheng M."/>
            <person name="Klumperman J."/>
            <person name="Rehmann H."/>
            <person name="Jaarsma D."/>
            <person name="Kapitein L.C."/>
            <person name="van der Sluijs P."/>
        </authorList>
    </citation>
    <scope>INTERACTION WITH RAB4A</scope>
</reference>
<reference key="14">
    <citation type="journal article" date="2010" name="Sci. Signal.">
        <title>Quantitative phosphoproteomics reveals widespread full phosphorylation site occupancy during mitosis.</title>
        <authorList>
            <person name="Olsen J.V."/>
            <person name="Vermeulen M."/>
            <person name="Santamaria A."/>
            <person name="Kumar C."/>
            <person name="Miller M.L."/>
            <person name="Jensen L.J."/>
            <person name="Gnad F."/>
            <person name="Cox J."/>
            <person name="Jensen T.S."/>
            <person name="Nigg E.A."/>
            <person name="Brunak S."/>
            <person name="Mann M."/>
        </authorList>
    </citation>
    <scope>PHOSPHORYLATION [LARGE SCALE ANALYSIS] AT SER-655</scope>
    <scope>IDENTIFICATION BY MASS SPECTROMETRY [LARGE SCALE ANALYSIS]</scope>
    <source>
        <tissue>Cervix carcinoma</tissue>
    </source>
</reference>
<reference key="15">
    <citation type="journal article" date="2011" name="BMC Syst. Biol.">
        <title>Initial characterization of the human central proteome.</title>
        <authorList>
            <person name="Burkard T.R."/>
            <person name="Planyavsky M."/>
            <person name="Kaupe I."/>
            <person name="Breitwieser F.P."/>
            <person name="Buerckstuemmer T."/>
            <person name="Bennett K.L."/>
            <person name="Superti-Furga G."/>
            <person name="Colinge J."/>
        </authorList>
    </citation>
    <scope>IDENTIFICATION BY MASS SPECTROMETRY [LARGE SCALE ANALYSIS]</scope>
</reference>
<reference key="16">
    <citation type="journal article" date="2011" name="Sci. Signal.">
        <title>System-wide temporal characterization of the proteome and phosphoproteome of human embryonic stem cell differentiation.</title>
        <authorList>
            <person name="Rigbolt K.T."/>
            <person name="Prokhorova T.A."/>
            <person name="Akimov V."/>
            <person name="Henningsen J."/>
            <person name="Johansen P.T."/>
            <person name="Kratchmarova I."/>
            <person name="Kassem M."/>
            <person name="Mann M."/>
            <person name="Olsen J.V."/>
            <person name="Blagoev B."/>
        </authorList>
    </citation>
    <scope>IDENTIFICATION BY MASS SPECTROMETRY [LARGE SCALE ANALYSIS]</scope>
</reference>
<reference key="17">
    <citation type="journal article" date="2012" name="Mol. Cell. Proteomics">
        <title>Comparative large-scale characterisation of plant vs. mammal proteins reveals similar and idiosyncratic N-alpha acetylation features.</title>
        <authorList>
            <person name="Bienvenut W.V."/>
            <person name="Sumpton D."/>
            <person name="Martinez A."/>
            <person name="Lilla S."/>
            <person name="Espagne C."/>
            <person name="Meinnel T."/>
            <person name="Giglione C."/>
        </authorList>
    </citation>
    <scope>ACETYLATION [LARGE SCALE ANALYSIS] AT ALA-2</scope>
    <scope>CLEAVAGE OF INITIATOR METHIONINE [LARGE SCALE ANALYSIS]</scope>
    <scope>IDENTIFICATION BY MASS SPECTROMETRY [LARGE SCALE ANALYSIS]</scope>
</reference>
<reference key="18">
    <citation type="journal article" date="2012" name="Proc. Natl. Acad. Sci. U.S.A.">
        <title>N-terminal acetylome analyses and functional insights of the N-terminal acetyltransferase NatB.</title>
        <authorList>
            <person name="Van Damme P."/>
            <person name="Lasa M."/>
            <person name="Polevoda B."/>
            <person name="Gazquez C."/>
            <person name="Elosegui-Artola A."/>
            <person name="Kim D.S."/>
            <person name="De Juan-Pardo E."/>
            <person name="Demeyer K."/>
            <person name="Hole K."/>
            <person name="Larrea E."/>
            <person name="Timmerman E."/>
            <person name="Prieto J."/>
            <person name="Arnesen T."/>
            <person name="Sherman F."/>
            <person name="Gevaert K."/>
            <person name="Aldabe R."/>
        </authorList>
    </citation>
    <scope>ACETYLATION [LARGE SCALE ANALYSIS] AT ALA-2</scope>
    <scope>CLEAVAGE OF INITIATOR METHIONINE [LARGE SCALE ANALYSIS]</scope>
    <scope>IDENTIFICATION BY MASS SPECTROMETRY [LARGE SCALE ANALYSIS]</scope>
</reference>
<reference key="19">
    <citation type="journal article" date="2013" name="J. Proteome Res.">
        <title>Toward a comprehensive characterization of a human cancer cell phosphoproteome.</title>
        <authorList>
            <person name="Zhou H."/>
            <person name="Di Palma S."/>
            <person name="Preisinger C."/>
            <person name="Peng M."/>
            <person name="Polat A.N."/>
            <person name="Heck A.J."/>
            <person name="Mohammed S."/>
        </authorList>
    </citation>
    <scope>PHOSPHORYLATION [LARGE SCALE ANALYSIS] AT SER-666</scope>
    <scope>IDENTIFICATION BY MASS SPECTROMETRY [LARGE SCALE ANALYSIS]</scope>
    <source>
        <tissue>Cervix carcinoma</tissue>
        <tissue>Erythroleukemia</tissue>
    </source>
</reference>
<reference key="20">
    <citation type="journal article" date="2014" name="J. Proteomics">
        <title>An enzyme assisted RP-RPLC approach for in-depth analysis of human liver phosphoproteome.</title>
        <authorList>
            <person name="Bian Y."/>
            <person name="Song C."/>
            <person name="Cheng K."/>
            <person name="Dong M."/>
            <person name="Wang F."/>
            <person name="Huang J."/>
            <person name="Sun D."/>
            <person name="Wang L."/>
            <person name="Ye M."/>
            <person name="Zou H."/>
        </authorList>
    </citation>
    <scope>IDENTIFICATION BY MASS SPECTROMETRY [LARGE SCALE ANALYSIS]</scope>
    <source>
        <tissue>Liver</tissue>
    </source>
</reference>
<feature type="initiator methionine" description="Removed" evidence="17 18">
    <location>
        <position position="1"/>
    </location>
</feature>
<feature type="chain" id="PRO_0000087581" description="GRIP1-associated protein 1">
    <location>
        <begin position="2"/>
        <end position="841"/>
    </location>
</feature>
<feature type="chain" id="PRO_0000441811" description="GRASP-1 C-terminal chain">
    <location>
        <begin position="599"/>
        <end position="841"/>
    </location>
</feature>
<feature type="region of interest" description="Disordered" evidence="4">
    <location>
        <begin position="532"/>
        <end position="551"/>
    </location>
</feature>
<feature type="region of interest" description="Disordered" evidence="4">
    <location>
        <begin position="558"/>
        <end position="580"/>
    </location>
</feature>
<feature type="region of interest" description="Disordered" evidence="4">
    <location>
        <begin position="681"/>
        <end position="706"/>
    </location>
</feature>
<feature type="coiled-coil region" evidence="3">
    <location>
        <begin position="4"/>
        <end position="161"/>
    </location>
</feature>
<feature type="coiled-coil region" evidence="3">
    <location>
        <begin position="208"/>
        <end position="641"/>
    </location>
</feature>
<feature type="coiled-coil region" evidence="3">
    <location>
        <begin position="701"/>
        <end position="735"/>
    </location>
</feature>
<feature type="coiled-coil region" evidence="3">
    <location>
        <begin position="785"/>
        <end position="814"/>
    </location>
</feature>
<feature type="compositionally biased region" description="Low complexity" evidence="4">
    <location>
        <begin position="682"/>
        <end position="694"/>
    </location>
</feature>
<feature type="site" description="Cleavage; by caspase-3" evidence="2">
    <location>
        <begin position="598"/>
        <end position="599"/>
    </location>
</feature>
<feature type="modified residue" description="N-acetylalanine" evidence="17 18">
    <location>
        <position position="2"/>
    </location>
</feature>
<feature type="modified residue" description="Phosphoserine" evidence="14 16">
    <location>
        <position position="655"/>
    </location>
</feature>
<feature type="modified residue" description="Phosphoserine" evidence="15 19">
    <location>
        <position position="666"/>
    </location>
</feature>
<feature type="modified residue" description="Phosphoserine" evidence="1">
    <location>
        <position position="668"/>
    </location>
</feature>
<feature type="modified residue" description="Phosphoserine" evidence="1">
    <location>
        <position position="669"/>
    </location>
</feature>
<feature type="modified residue" description="Phosphoserine" evidence="2">
    <location>
        <position position="688"/>
    </location>
</feature>
<feature type="modified residue" description="Phosphoserine" evidence="15">
    <location>
        <position position="690"/>
    </location>
</feature>
<feature type="modified residue" description="Phosphoserine" evidence="1">
    <location>
        <position position="691"/>
    </location>
</feature>
<feature type="modified residue" description="Phosphoserine" evidence="15">
    <location>
        <position position="692"/>
    </location>
</feature>
<feature type="splice variant" id="VSP_015700" description="In isoform 2." evidence="11">
    <location>
        <begin position="103"/>
        <end position="155"/>
    </location>
</feature>
<feature type="splice variant" id="VSP_015702" description="In isoform 3." evidence="12">
    <location>
        <begin position="317"/>
        <end position="347"/>
    </location>
</feature>
<feature type="splice variant" id="VSP_015703" description="In isoform 2." evidence="11">
    <location>
        <begin position="534"/>
        <end position="559"/>
    </location>
</feature>
<feature type="splice variant" id="VSP_015704" description="In isoform 2." evidence="11">
    <original>SLSSSPQAQPPRPAELS</original>
    <variation>VRGKEEPTAPASLNPKI</variation>
    <location>
        <begin position="688"/>
        <end position="704"/>
    </location>
</feature>
<feature type="splice variant" id="VSP_015705" description="In isoform 2." evidence="11">
    <location>
        <begin position="705"/>
        <end position="841"/>
    </location>
</feature>
<feature type="sequence variant" id="VAR_080637" description="In dbSNP:rs61735977." evidence="5 6 9">
    <original>L</original>
    <variation>P</variation>
    <location>
        <position position="179"/>
    </location>
</feature>
<feature type="sequence conflict" description="In Ref. 6; CAB95949." evidence="12" ref="6">
    <original>R</original>
    <variation>G</variation>
    <location>
        <position position="677"/>
    </location>
</feature>
<protein>
    <recommendedName>
        <fullName evidence="12">GRIP1-associated protein 1</fullName>
        <shortName>GRASP-1</shortName>
    </recommendedName>
    <component>
        <recommendedName>
            <fullName evidence="2">GRASP-1 C-terminal chain</fullName>
        </recommendedName>
        <alternativeName>
            <fullName>30kDa C-terminus form</fullName>
        </alternativeName>
    </component>
</protein>
<gene>
    <name evidence="13" type="primary">GRIPAP1</name>
    <name type="synonym">KIAA1167</name>
</gene>
<name>GRAP1_HUMAN</name>
<keyword id="KW-0007">Acetylation</keyword>
<keyword id="KW-0025">Alternative splicing</keyword>
<keyword id="KW-0966">Cell projection</keyword>
<keyword id="KW-0175">Coiled coil</keyword>
<keyword id="KW-0903">Direct protein sequencing</keyword>
<keyword id="KW-0967">Endosome</keyword>
<keyword id="KW-0472">Membrane</keyword>
<keyword id="KW-0597">Phosphoprotein</keyword>
<keyword id="KW-0653">Protein transport</keyword>
<keyword id="KW-1267">Proteomics identification</keyword>
<keyword id="KW-1185">Reference proteome</keyword>
<keyword id="KW-0770">Synapse</keyword>
<keyword id="KW-0813">Transport</keyword>
<sequence>MAQALSEEEFQRMQAQLLELRTNNYQLSDELRKNGVELTSLRQKVAYLDKEFSKAQKALSKSKKAQEVEVLLSENEMLQAKLHSQEEDFRLQNSTLMAEFSKLCSQMEQLEQENQQLKEGAAGAGVAQAGPLVDGELLRLQAENTALQKNVAALQERYGKEAGKFSAVSEGQGDPPGGLAPTVLAPMPLAEVELKWEMEKEEKRLLWEQLQGLESSKQAETSRLQEELAKLSEKLKKKQESFCRLQTEKETLFNDSRNKIEELQQRKEADHKAQLARTQKLQQELEAANQSLAELRDQRQGERLEHAAALRALQDQVSIQSADAQEQVEGLLAENNALRTSLAALEQIQTAKTQELNMLREQTTGLAAELQQQQAEYEDLMGQKDDLNSQLQESLRANSRLLEQLQEIGQEKEQLTQELQEARKSAEKRKAMLDELAMETLQEKSQHKEELGAVRLRHEKEVLGVRARYERELRELHEDKKRQEEELRGQIREEKARTRELETLQQTVEELQAQVHSMDGAKGWFERRLKEAEESLQQQQQEQEEALKQCREQHAAELKGKEEELQDVRDQLEQAQEERDCHLKTISSLKQEVKDTVDGQRILEKKGSAALKDLKRQLHLERKRADKLQERLQDILTNSKSRSGLEELVLSEMNSPSRTQTGDSSSISSFSYREILREKESSAVPARSLSSSPQAQPPRPAELSDEEVAELFQRLAETQQEKWMLEEKVKHLEVSSASMAEDLCRKSAIIETYVMDSRIDVSVAAGHTDRSGLGSVLRDLVKPGDENLREMNKKLQNMLEEQLTKNMHLHKDMEVLSQEIVRLSKECVGPPDPDLEPGETS</sequence>
<accession>Q4V328</accession>
<accession>A6NL78</accession>
<accession>Q3MJ75</accession>
<accession>Q4V327</accession>
<accession>Q4V330</accession>
<accession>Q5HYG1</accession>
<accession>Q6N046</accession>
<accession>Q96DH8</accession>
<accession>Q9NQ43</accession>
<accession>Q9ULQ3</accession>
<organism>
    <name type="scientific">Homo sapiens</name>
    <name type="common">Human</name>
    <dbReference type="NCBI Taxonomy" id="9606"/>
    <lineage>
        <taxon>Eukaryota</taxon>
        <taxon>Metazoa</taxon>
        <taxon>Chordata</taxon>
        <taxon>Craniata</taxon>
        <taxon>Vertebrata</taxon>
        <taxon>Euteleostomi</taxon>
        <taxon>Mammalia</taxon>
        <taxon>Eutheria</taxon>
        <taxon>Euarchontoglires</taxon>
        <taxon>Primates</taxon>
        <taxon>Haplorrhini</taxon>
        <taxon>Catarrhini</taxon>
        <taxon>Hominidae</taxon>
        <taxon>Homo</taxon>
    </lineage>
</organism>
<proteinExistence type="evidence at protein level"/>
<comment type="function">
    <text evidence="2">Regulates the endosomal recycling back to the neuronal plasma membrane, possibly by connecting early and late recycling endosomal domains and promoting segregation of recycling endosomes from early endosomal membranes. Involved in the localization of recycling endosomes to dendritic spines, thereby playing a role in the maintenance of dendritic spine morphology. Required for the activity-induced AMPA receptor recycling to dendrite membranes and for long-term potentiation and synaptic plasticity (By similarity).</text>
</comment>
<comment type="function">
    <molecule>GRASP-1 C-terminal chain</molecule>
    <text evidence="8">Functions as a scaffold protein to facilitate MAP3K1/MEKK1-mediated activation of the JNK1 kinase by phosphorylation, possibly by bringing MAP3K1/MEKK1 and JNK1 in close proximity.</text>
</comment>
<comment type="subunit">
    <text evidence="2 8 10">Interacts with GRIP1, GRIP2 and AMPA receptors (By similarity). Interacts (via C-terminus) with MAPK8/JNK1 and MAP3K1/MEKK1; the interaction promotes MAP3K1-mediated phosphorylation of MAPK8 (PubMed:17761173). Interacts (via N-terminus) with RAB4A (in GTP-bound form) (PubMed:20098723). Interacts (via C-terminus) with STX12 (By similarity).</text>
</comment>
<comment type="interaction">
    <interactant intactId="EBI-717919">
        <id>Q4V328</id>
    </interactant>
    <interactant intactId="EBI-5463075">
        <id>Q4LEZ3</id>
        <label>AARD</label>
    </interactant>
    <organismsDiffer>false</organismsDiffer>
    <experiments>3</experiments>
</comment>
<comment type="interaction">
    <interactant intactId="EBI-717919">
        <id>Q4V328</id>
    </interactant>
    <interactant intactId="EBI-17183751">
        <id>X5D778</id>
        <label>ANKRD11</label>
    </interactant>
    <organismsDiffer>false</organismsDiffer>
    <experiments>3</experiments>
</comment>
<comment type="interaction">
    <interactant intactId="EBI-717919">
        <id>Q4V328</id>
    </interactant>
    <interactant intactId="EBI-1047414">
        <id>Q9H1Y0</id>
        <label>ATG5</label>
    </interactant>
    <organismsDiffer>false</organismsDiffer>
    <experiments>3</experiments>
</comment>
<comment type="interaction">
    <interactant intactId="EBI-717919">
        <id>Q4V328</id>
    </interactant>
    <interactant intactId="EBI-358049">
        <id>Q13895</id>
        <label>BYSL</label>
    </interactant>
    <organismsDiffer>false</organismsDiffer>
    <experiments>3</experiments>
</comment>
<comment type="interaction">
    <interactant intactId="EBI-717919">
        <id>Q4V328</id>
    </interactant>
    <interactant intactId="EBI-712912">
        <id>Q9HC52</id>
        <label>CBX8</label>
    </interactant>
    <organismsDiffer>false</organismsDiffer>
    <experiments>3</experiments>
</comment>
<comment type="interaction">
    <interactant intactId="EBI-717919">
        <id>Q4V328</id>
    </interactant>
    <interactant intactId="EBI-10261970">
        <id>Q8IW40</id>
        <label>CCDC103</label>
    </interactant>
    <organismsDiffer>false</organismsDiffer>
    <experiments>8</experiments>
</comment>
<comment type="interaction">
    <interactant intactId="EBI-717919">
        <id>Q4V328</id>
    </interactant>
    <interactant intactId="EBI-740814">
        <id>Q8N715</id>
        <label>CCDC185</label>
    </interactant>
    <organismsDiffer>false</organismsDiffer>
    <experiments>3</experiments>
</comment>
<comment type="interaction">
    <interactant intactId="EBI-717919">
        <id>Q4V328</id>
    </interactant>
    <interactant intactId="EBI-741406">
        <id>P51946</id>
        <label>CCNH</label>
    </interactant>
    <organismsDiffer>false</organismsDiffer>
    <experiments>3</experiments>
</comment>
<comment type="interaction">
    <interactant intactId="EBI-717919">
        <id>Q4V328</id>
    </interactant>
    <interactant intactId="EBI-295634">
        <id>Q16543</id>
        <label>CDC37</label>
    </interactant>
    <organismsDiffer>false</organismsDiffer>
    <experiments>3</experiments>
</comment>
<comment type="interaction">
    <interactant intactId="EBI-717919">
        <id>Q4V328</id>
    </interactant>
    <interactant intactId="EBI-1104570">
        <id>Q8IYX8</id>
        <label>CEP57L1</label>
    </interactant>
    <organismsDiffer>false</organismsDiffer>
    <experiments>6</experiments>
</comment>
<comment type="interaction">
    <interactant intactId="EBI-717919">
        <id>Q4V328</id>
    </interactant>
    <interactant intactId="EBI-742422">
        <id>Q96M91</id>
        <label>CFAP53</label>
    </interactant>
    <organismsDiffer>false</organismsDiffer>
    <experiments>3</experiments>
</comment>
<comment type="interaction">
    <interactant intactId="EBI-717919">
        <id>Q4V328</id>
    </interactant>
    <interactant intactId="EBI-5453285">
        <id>Q2TBE0</id>
        <label>CWF19L2</label>
    </interactant>
    <organismsDiffer>false</organismsDiffer>
    <experiments>3</experiments>
</comment>
<comment type="interaction">
    <interactant intactId="EBI-717919">
        <id>Q4V328</id>
    </interactant>
    <interactant intactId="EBI-77321">
        <id>Q9UER7</id>
        <label>DAXX</label>
    </interactant>
    <organismsDiffer>false</organismsDiffer>
    <experiments>3</experiments>
</comment>
<comment type="interaction">
    <interactant intactId="EBI-717919">
        <id>Q4V328</id>
    </interactant>
    <interactant intactId="EBI-529989">
        <id>Q9NRI5</id>
        <label>DISC1</label>
    </interactant>
    <organismsDiffer>false</organismsDiffer>
    <experiments>8</experiments>
</comment>
<comment type="interaction">
    <interactant intactId="EBI-717919">
        <id>Q4V328</id>
    </interactant>
    <interactant intactId="EBI-11988027">
        <id>Q9NRI5-2</id>
        <label>DISC1</label>
    </interactant>
    <organismsDiffer>false</organismsDiffer>
    <experiments>3</experiments>
</comment>
<comment type="interaction">
    <interactant intactId="EBI-717919">
        <id>Q4V328</id>
    </interactant>
    <interactant intactId="EBI-2924519">
        <id>Q9BV47</id>
        <label>DUSP26</label>
    </interactant>
    <organismsDiffer>false</organismsDiffer>
    <experiments>3</experiments>
</comment>
<comment type="interaction">
    <interactant intactId="EBI-717919">
        <id>Q4V328</id>
    </interactant>
    <interactant intactId="EBI-2339219">
        <id>Q08426</id>
        <label>EHHADH</label>
    </interactant>
    <organismsDiffer>false</organismsDiffer>
    <experiments>3</experiments>
</comment>
<comment type="interaction">
    <interactant intactId="EBI-717919">
        <id>Q4V328</id>
    </interactant>
    <interactant intactId="EBI-742350">
        <id>Q14241</id>
        <label>ELOA</label>
    </interactant>
    <organismsDiffer>false</organismsDiffer>
    <experiments>3</experiments>
</comment>
<comment type="interaction">
    <interactant intactId="EBI-717919">
        <id>Q4V328</id>
    </interactant>
    <interactant intactId="EBI-744099">
        <id>Q9H0I2</id>
        <label>ENKD1</label>
    </interactant>
    <organismsDiffer>false</organismsDiffer>
    <experiments>3</experiments>
</comment>
<comment type="interaction">
    <interactant intactId="EBI-717919">
        <id>Q4V328</id>
    </interactant>
    <interactant intactId="EBI-719941">
        <id>Q3B820</id>
        <label>FAM161A</label>
    </interactant>
    <organismsDiffer>false</organismsDiffer>
    <experiments>3</experiments>
</comment>
<comment type="interaction">
    <interactant intactId="EBI-717919">
        <id>Q4V328</id>
    </interactant>
    <interactant intactId="EBI-742802">
        <id>Q9Y247</id>
        <label>FAM50B</label>
    </interactant>
    <organismsDiffer>false</organismsDiffer>
    <experiments>3</experiments>
</comment>
<comment type="interaction">
    <interactant intactId="EBI-717919">
        <id>Q4V328</id>
    </interactant>
    <interactant intactId="EBI-6658203">
        <id>Q86YD7</id>
        <label>FAM90A1</label>
    </interactant>
    <organismsDiffer>false</organismsDiffer>
    <experiments>3</experiments>
</comment>
<comment type="interaction">
    <interactant intactId="EBI-717919">
        <id>Q4V328</id>
    </interactant>
    <interactant intactId="EBI-1052570">
        <id>O95995</id>
        <label>GAS8</label>
    </interactant>
    <organismsDiffer>false</organismsDiffer>
    <experiments>3</experiments>
</comment>
<comment type="interaction">
    <interactant intactId="EBI-717919">
        <id>Q4V328</id>
    </interactant>
    <interactant intactId="EBI-717919">
        <id>Q4V328</id>
        <label>GRIPAP1</label>
    </interactant>
    <organismsDiffer>false</organismsDiffer>
    <experiments>3</experiments>
</comment>
<comment type="interaction">
    <interactant intactId="EBI-717919">
        <id>Q4V328</id>
    </interactant>
    <interactant intactId="EBI-11953488">
        <id>P56524-2</id>
        <label>HDAC4</label>
    </interactant>
    <organismsDiffer>false</organismsDiffer>
    <experiments>3</experiments>
</comment>
<comment type="interaction">
    <interactant intactId="EBI-717919">
        <id>Q4V328</id>
    </interactant>
    <interactant intactId="EBI-2866661">
        <id>Q9UNL4</id>
        <label>ING4</label>
    </interactant>
    <organismsDiffer>false</organismsDiffer>
    <experiments>3</experiments>
</comment>
<comment type="interaction">
    <interactant intactId="EBI-717919">
        <id>Q4V328</id>
    </interactant>
    <interactant intactId="EBI-488533">
        <id>Q8WYH8</id>
        <label>ING5</label>
    </interactant>
    <organismsDiffer>false</organismsDiffer>
    <experiments>6</experiments>
</comment>
<comment type="interaction">
    <interactant intactId="EBI-717919">
        <id>Q4V328</id>
    </interactant>
    <interactant intactId="EBI-739832">
        <id>Q8TBB1</id>
        <label>LNX1</label>
    </interactant>
    <organismsDiffer>false</organismsDiffer>
    <experiments>3</experiments>
</comment>
<comment type="interaction">
    <interactant intactId="EBI-717919">
        <id>Q4V328</id>
    </interactant>
    <interactant intactId="EBI-16439278">
        <id>Q6FHY5</id>
        <label>MEOX2</label>
    </interactant>
    <organismsDiffer>false</organismsDiffer>
    <experiments>3</experiments>
</comment>
<comment type="interaction">
    <interactant intactId="EBI-717919">
        <id>Q4V328</id>
    </interactant>
    <interactant intactId="EBI-1048159">
        <id>P55081</id>
        <label>MFAP1</label>
    </interactant>
    <organismsDiffer>false</organismsDiffer>
    <experiments>3</experiments>
</comment>
<comment type="interaction">
    <interactant intactId="EBI-717919">
        <id>Q4V328</id>
    </interactant>
    <interactant intactId="EBI-14086479">
        <id>Q8IVT4</id>
        <label>MGC50722</label>
    </interactant>
    <organismsDiffer>false</organismsDiffer>
    <experiments>3</experiments>
</comment>
<comment type="interaction">
    <interactant intactId="EBI-717919">
        <id>Q4V328</id>
    </interactant>
    <interactant intactId="EBI-740216">
        <id>P55198</id>
        <label>MLLT6</label>
    </interactant>
    <organismsDiffer>false</organismsDiffer>
    <experiments>3</experiments>
</comment>
<comment type="interaction">
    <interactant intactId="EBI-717919">
        <id>Q4V328</id>
    </interactant>
    <interactant intactId="EBI-1181722">
        <id>Q9H093</id>
        <label>NUAK2</label>
    </interactant>
    <organismsDiffer>false</organismsDiffer>
    <experiments>3</experiments>
</comment>
<comment type="interaction">
    <interactant intactId="EBI-717919">
        <id>Q4V328</id>
    </interactant>
    <interactant intactId="EBI-14066006">
        <id>Q4G0R1</id>
        <label>PIBF1</label>
    </interactant>
    <organismsDiffer>false</organismsDiffer>
    <experiments>3</experiments>
</comment>
<comment type="interaction">
    <interactant intactId="EBI-717919">
        <id>Q4V328</id>
    </interactant>
    <interactant intactId="EBI-10987518">
        <id>Q99959-2</id>
        <label>PKP2</label>
    </interactant>
    <organismsDiffer>false</organismsDiffer>
    <experiments>3</experiments>
</comment>
<comment type="interaction">
    <interactant intactId="EBI-717919">
        <id>Q4V328</id>
    </interactant>
    <interactant intactId="EBI-2557469">
        <id>Q6NYC8</id>
        <label>PPP1R18</label>
    </interactant>
    <organismsDiffer>false</organismsDiffer>
    <experiments>4</experiments>
</comment>
<comment type="interaction">
    <interactant intactId="EBI-717919">
        <id>Q4V328</id>
    </interactant>
    <interactant intactId="EBI-2798416">
        <id>Q99633</id>
        <label>PRPF18</label>
    </interactant>
    <organismsDiffer>false</organismsDiffer>
    <experiments>3</experiments>
</comment>
<comment type="interaction">
    <interactant intactId="EBI-717919">
        <id>Q4V328</id>
    </interactant>
    <interactant intactId="EBI-372273">
        <id>P20618</id>
        <label>PSMB1</label>
    </interactant>
    <organismsDiffer>false</organismsDiffer>
    <experiments>3</experiments>
</comment>
<comment type="interaction">
    <interactant intactId="EBI-717919">
        <id>Q4V328</id>
    </interactant>
    <interactant intactId="EBI-722284">
        <id>P20338</id>
        <label>RAB4A</label>
    </interactant>
    <organismsDiffer>false</organismsDiffer>
    <experiments>4</experiments>
</comment>
<comment type="interaction">
    <interactant intactId="EBI-717919">
        <id>Q4V328</id>
    </interactant>
    <interactant intactId="EBI-1504830">
        <id>Q9P2K3-2</id>
        <label>RCOR3</label>
    </interactant>
    <organismsDiffer>false</organismsDiffer>
    <experiments>3</experiments>
</comment>
<comment type="interaction">
    <interactant intactId="EBI-717919">
        <id>Q4V328</id>
    </interactant>
    <interactant intactId="EBI-455078">
        <id>Q969G3</id>
        <label>SMARCE1</label>
    </interactant>
    <organismsDiffer>false</organismsDiffer>
    <experiments>3</experiments>
</comment>
<comment type="interaction">
    <interactant intactId="EBI-717919">
        <id>Q4V328</id>
    </interactant>
    <interactant intactId="EBI-12004298">
        <id>O75971-2</id>
        <label>SNAPC5</label>
    </interactant>
    <organismsDiffer>false</organismsDiffer>
    <experiments>3</experiments>
</comment>
<comment type="interaction">
    <interactant intactId="EBI-717919">
        <id>Q4V328</id>
    </interactant>
    <interactant intactId="EBI-632715">
        <id>Q13573</id>
        <label>SNW1</label>
    </interactant>
    <organismsDiffer>false</organismsDiffer>
    <experiments>3</experiments>
</comment>
<comment type="interaction">
    <interactant intactId="EBI-717919">
        <id>Q4V328</id>
    </interactant>
    <interactant intactId="EBI-6083058">
        <id>Q9ULZ2</id>
        <label>STAP1</label>
    </interactant>
    <organismsDiffer>false</organismsDiffer>
    <experiments>3</experiments>
</comment>
<comment type="interaction">
    <interactant intactId="EBI-717919">
        <id>Q4V328</id>
    </interactant>
    <interactant intactId="EBI-17455779">
        <id>Q9Y2I9-2</id>
        <label>TBC1D30</label>
    </interactant>
    <organismsDiffer>false</organismsDiffer>
    <experiments>3</experiments>
</comment>
<comment type="interaction">
    <interactant intactId="EBI-717919">
        <id>Q4V328</id>
    </interactant>
    <interactant intactId="EBI-710310">
        <id>Q15560</id>
        <label>TCEA2</label>
    </interactant>
    <organismsDiffer>false</organismsDiffer>
    <experiments>3</experiments>
</comment>
<comment type="interaction">
    <interactant intactId="EBI-717919">
        <id>Q4V328</id>
    </interactant>
    <interactant intactId="EBI-3923210">
        <id>Q8TDR4</id>
        <label>TCP10L</label>
    </interactant>
    <organismsDiffer>false</organismsDiffer>
    <experiments>5</experiments>
</comment>
<comment type="interaction">
    <interactant intactId="EBI-717919">
        <id>Q4V328</id>
    </interactant>
    <interactant intactId="EBI-11139477">
        <id>Q96N21</id>
        <label>TEPSIN</label>
    </interactant>
    <organismsDiffer>false</organismsDiffer>
    <experiments>3</experiments>
</comment>
<comment type="interaction">
    <interactant intactId="EBI-717919">
        <id>Q4V328</id>
    </interactant>
    <interactant intactId="EBI-355744">
        <id>Q12933</id>
        <label>TRAF2</label>
    </interactant>
    <organismsDiffer>false</organismsDiffer>
    <experiments>3</experiments>
</comment>
<comment type="interaction">
    <interactant intactId="EBI-717919">
        <id>Q4V328</id>
    </interactant>
    <interactant intactId="EBI-10241197">
        <id>Q3SY00</id>
        <label>TSGA10IP</label>
    </interactant>
    <organismsDiffer>false</organismsDiffer>
    <experiments>3</experiments>
</comment>
<comment type="interaction">
    <interactant intactId="EBI-717919">
        <id>Q4V328</id>
    </interactant>
    <interactant intactId="EBI-10687282">
        <id>Q9NRE2</id>
        <label>TSHZ2</label>
    </interactant>
    <organismsDiffer>false</organismsDiffer>
    <experiments>3</experiments>
</comment>
<comment type="interaction">
    <interactant intactId="EBI-717919">
        <id>Q4V328</id>
    </interactant>
    <interactant intactId="EBI-21353855">
        <id>Q99598</id>
        <label>TSNAX</label>
    </interactant>
    <organismsDiffer>false</organismsDiffer>
    <experiments>3</experiments>
</comment>
<comment type="interaction">
    <interactant intactId="EBI-717919">
        <id>Q4V328</id>
    </interactant>
    <interactant intactId="EBI-9090990">
        <id>Q5W5X9-3</id>
        <label>TTC23</label>
    </interactant>
    <organismsDiffer>false</organismsDiffer>
    <experiments>3</experiments>
</comment>
<comment type="interaction">
    <interactant intactId="EBI-717919">
        <id>Q4V328</id>
    </interactant>
    <interactant intactId="EBI-743272">
        <id>O75604</id>
        <label>USP2</label>
    </interactant>
    <organismsDiffer>false</organismsDiffer>
    <experiments>3</experiments>
</comment>
<comment type="interaction">
    <interactant intactId="EBI-717919">
        <id>Q4V328</id>
    </interactant>
    <interactant intactId="EBI-2682299">
        <id>Q96NC0</id>
        <label>ZMAT2</label>
    </interactant>
    <organismsDiffer>false</organismsDiffer>
    <experiments>3</experiments>
</comment>
<comment type="interaction">
    <interactant intactId="EBI-717919">
        <id>Q4V328</id>
    </interactant>
    <interactant intactId="EBI-3937106">
        <id>Q9P2Y4</id>
        <label>ZNF219</label>
    </interactant>
    <organismsDiffer>false</organismsDiffer>
    <experiments>3</experiments>
</comment>
<comment type="interaction">
    <interactant intactId="EBI-717919">
        <id>Q4V328</id>
    </interactant>
    <interactant intactId="EBI-10177272">
        <id>P15622-3</id>
        <label>ZNF250</label>
    </interactant>
    <organismsDiffer>false</organismsDiffer>
    <experiments>3</experiments>
</comment>
<comment type="interaction">
    <interactant intactId="EBI-717919">
        <id>Q4V328</id>
    </interactant>
    <interactant intactId="EBI-11041653">
        <id>P13682</id>
        <label>ZNF35</label>
    </interactant>
    <organismsDiffer>false</organismsDiffer>
    <experiments>3</experiments>
</comment>
<comment type="interaction">
    <interactant intactId="EBI-717919">
        <id>Q4V328</id>
    </interactant>
    <interactant intactId="EBI-5667516">
        <id>Q9Y2P0</id>
        <label>ZNF835</label>
    </interactant>
    <organismsDiffer>false</organismsDiffer>
    <experiments>3</experiments>
</comment>
<comment type="subcellular location">
    <subcellularLocation>
        <location evidence="7">Early endosome membrane</location>
        <topology evidence="12">Peripheral membrane protein</topology>
    </subcellularLocation>
    <subcellularLocation>
        <location evidence="2">Recycling endosome membrane</location>
        <topology evidence="2">Peripheral membrane protein</topology>
    </subcellularLocation>
    <subcellularLocation>
        <location evidence="2">Cell projection</location>
        <location evidence="2">Axon</location>
    </subcellularLocation>
    <subcellularLocation>
        <location evidence="2">Cell projection</location>
        <location evidence="2">Dendrite</location>
    </subcellularLocation>
    <subcellularLocation>
        <location evidence="2">Synapse</location>
    </subcellularLocation>
    <text evidence="2">Localizes to recycling endosomal tubules that are emanating from early endosomes.</text>
</comment>
<comment type="alternative products">
    <event type="alternative splicing"/>
    <isoform>
        <id>Q4V328-1</id>
        <name>1</name>
        <sequence type="displayed"/>
    </isoform>
    <isoform>
        <id>Q4V328-2</id>
        <name>2</name>
        <sequence type="described" ref="VSP_015700 VSP_015703 VSP_015704 VSP_015705"/>
    </isoform>
    <isoform>
        <id>Q4V328-4</id>
        <name>3</name>
        <sequence type="described" ref="VSP_015702"/>
    </isoform>
</comment>
<comment type="PTM">
    <text evidence="2">Proteolytically cleaved by caspase-3. A minor C-terminal proteolytic fragment of 30 kDa is produced. Proteolytic cleavage is required for JNK signaling activation.</text>
</comment>
<comment type="miscellaneous">
    <text>Antibodies against GRIPAP1 have been found in sera of a patient who developed Raynaud's syndrome and telangiectasias.</text>
</comment>
<comment type="sequence caution" evidence="12">
    <conflict type="miscellaneous discrepancy">
        <sequence resource="EMBL-CDS" id="CAE45824"/>
    </conflict>
    <text>Probable cloning artifact.</text>
</comment>
<evidence type="ECO:0000250" key="1">
    <source>
        <dbReference type="UniProtKB" id="Q8VD04"/>
    </source>
</evidence>
<evidence type="ECO:0000250" key="2">
    <source>
        <dbReference type="UniProtKB" id="Q9JHZ4"/>
    </source>
</evidence>
<evidence type="ECO:0000255" key="3"/>
<evidence type="ECO:0000256" key="4">
    <source>
        <dbReference type="SAM" id="MobiDB-lite"/>
    </source>
</evidence>
<evidence type="ECO:0000269" key="5">
    <source>
    </source>
</evidence>
<evidence type="ECO:0000269" key="6">
    <source>
    </source>
</evidence>
<evidence type="ECO:0000269" key="7">
    <source>
    </source>
</evidence>
<evidence type="ECO:0000269" key="8">
    <source>
    </source>
</evidence>
<evidence type="ECO:0000269" key="9">
    <source>
    </source>
</evidence>
<evidence type="ECO:0000269" key="10">
    <source>
    </source>
</evidence>
<evidence type="ECO:0000303" key="11">
    <source>
    </source>
</evidence>
<evidence type="ECO:0000305" key="12"/>
<evidence type="ECO:0000312" key="13">
    <source>
        <dbReference type="HGNC" id="HGNC:18706"/>
    </source>
</evidence>
<evidence type="ECO:0007744" key="14">
    <source>
    </source>
</evidence>
<evidence type="ECO:0007744" key="15">
    <source>
    </source>
</evidence>
<evidence type="ECO:0007744" key="16">
    <source>
    </source>
</evidence>
<evidence type="ECO:0007744" key="17">
    <source>
    </source>
</evidence>
<evidence type="ECO:0007744" key="18">
    <source>
    </source>
</evidence>
<evidence type="ECO:0007744" key="19">
    <source>
    </source>
</evidence>
<dbReference type="EMBL" id="BX640704">
    <property type="protein sequence ID" value="CAE45824.1"/>
    <property type="status" value="ALT_SEQ"/>
    <property type="molecule type" value="mRNA"/>
</dbReference>
<dbReference type="EMBL" id="BX647804">
    <property type="protein sequence ID" value="CAI45985.1"/>
    <property type="status" value="ALT_TERM"/>
    <property type="molecule type" value="mRNA"/>
</dbReference>
<dbReference type="EMBL" id="AF207550">
    <property type="status" value="NOT_ANNOTATED_CDS"/>
    <property type="molecule type" value="Genomic_DNA"/>
</dbReference>
<dbReference type="EMBL" id="BX530088">
    <property type="status" value="NOT_ANNOTATED_CDS"/>
    <property type="molecule type" value="Genomic_DNA"/>
</dbReference>
<dbReference type="EMBL" id="BC001522">
    <property type="protein sequence ID" value="AAH01522.2"/>
    <property type="molecule type" value="mRNA"/>
</dbReference>
<dbReference type="EMBL" id="BC101544">
    <property type="protein sequence ID" value="AAI01545.1"/>
    <property type="molecule type" value="mRNA"/>
</dbReference>
<dbReference type="EMBL" id="BC101546">
    <property type="protein sequence ID" value="AAI01547.1"/>
    <property type="molecule type" value="mRNA"/>
</dbReference>
<dbReference type="EMBL" id="AB032993">
    <property type="protein sequence ID" value="BAA86481.1"/>
    <property type="molecule type" value="mRNA"/>
</dbReference>
<dbReference type="EMBL" id="AJ297364">
    <property type="protein sequence ID" value="CAB95949.1"/>
    <property type="molecule type" value="mRNA"/>
</dbReference>
<dbReference type="CCDS" id="CCDS35248.1">
    <molecule id="Q4V328-1"/>
</dbReference>
<dbReference type="RefSeq" id="NP_064522.3">
    <molecule id="Q4V328-1"/>
    <property type="nucleotide sequence ID" value="NM_020137.4"/>
</dbReference>
<dbReference type="SMR" id="Q4V328"/>
<dbReference type="BioGRID" id="121210">
    <property type="interactions" value="200"/>
</dbReference>
<dbReference type="CORUM" id="Q4V328"/>
<dbReference type="DIP" id="DIP-47299N"/>
<dbReference type="FunCoup" id="Q4V328">
    <property type="interactions" value="2294"/>
</dbReference>
<dbReference type="IntAct" id="Q4V328">
    <property type="interactions" value="105"/>
</dbReference>
<dbReference type="MINT" id="Q4V328"/>
<dbReference type="STRING" id="9606.ENSP00000365606"/>
<dbReference type="GlyCosmos" id="Q4V328">
    <property type="glycosylation" value="1 site, 1 glycan"/>
</dbReference>
<dbReference type="GlyGen" id="Q4V328">
    <property type="glycosylation" value="1 site, 1 O-linked glycan (1 site)"/>
</dbReference>
<dbReference type="iPTMnet" id="Q4V328"/>
<dbReference type="MetOSite" id="Q4V328"/>
<dbReference type="PhosphoSitePlus" id="Q4V328"/>
<dbReference type="BioMuta" id="GRIPAP1"/>
<dbReference type="DMDM" id="74753569"/>
<dbReference type="jPOST" id="Q4V328"/>
<dbReference type="MassIVE" id="Q4V328"/>
<dbReference type="PaxDb" id="9606-ENSP00000365606"/>
<dbReference type="PeptideAtlas" id="Q4V328"/>
<dbReference type="ProteomicsDB" id="62272">
    <molecule id="Q4V328-1"/>
</dbReference>
<dbReference type="ProteomicsDB" id="62273">
    <molecule id="Q4V328-2"/>
</dbReference>
<dbReference type="ProteomicsDB" id="62275">
    <molecule id="Q4V328-4"/>
</dbReference>
<dbReference type="Pumba" id="Q4V328"/>
<dbReference type="Antibodypedia" id="355">
    <property type="antibodies" value="236 antibodies from 32 providers"/>
</dbReference>
<dbReference type="DNASU" id="56850"/>
<dbReference type="Ensembl" id="ENST00000376423.8">
    <molecule id="Q4V328-1"/>
    <property type="protein sequence ID" value="ENSP00000365606.5"/>
    <property type="gene ID" value="ENSG00000068400.14"/>
</dbReference>
<dbReference type="Ensembl" id="ENST00000593475.6">
    <molecule id="Q4V328-4"/>
    <property type="protein sequence ID" value="ENSP00000469842.2"/>
    <property type="gene ID" value="ENSG00000068400.14"/>
</dbReference>
<dbReference type="Ensembl" id="ENST00000611757.4">
    <molecule id="Q4V328-2"/>
    <property type="protein sequence ID" value="ENSP00000515491.1"/>
    <property type="gene ID" value="ENSG00000068400.14"/>
</dbReference>
<dbReference type="Ensembl" id="ENST00000710115.1">
    <molecule id="Q4V328-1"/>
    <property type="protein sequence ID" value="ENSP00000518067.1"/>
    <property type="gene ID" value="ENSG00000292219.1"/>
</dbReference>
<dbReference type="Ensembl" id="ENST00000710116.1">
    <molecule id="Q4V328-4"/>
    <property type="protein sequence ID" value="ENSP00000518068.1"/>
    <property type="gene ID" value="ENSG00000292219.1"/>
</dbReference>
<dbReference type="Ensembl" id="ENST00000710199.1">
    <molecule id="Q4V328-2"/>
    <property type="protein sequence ID" value="ENSP00000518120.1"/>
    <property type="gene ID" value="ENSG00000292219.1"/>
</dbReference>
<dbReference type="GeneID" id="56850"/>
<dbReference type="KEGG" id="hsa:56850"/>
<dbReference type="MANE-Select" id="ENST00000376423.8">
    <property type="protein sequence ID" value="ENSP00000365606.5"/>
    <property type="RefSeq nucleotide sequence ID" value="NM_020137.5"/>
    <property type="RefSeq protein sequence ID" value="NP_064522.4"/>
</dbReference>
<dbReference type="UCSC" id="uc033ecr.2">
    <molecule id="Q4V328-1"/>
    <property type="organism name" value="human"/>
</dbReference>
<dbReference type="AGR" id="HGNC:18706"/>
<dbReference type="CTD" id="56850"/>
<dbReference type="DisGeNET" id="56850"/>
<dbReference type="GeneCards" id="GRIPAP1"/>
<dbReference type="HGNC" id="HGNC:18706">
    <property type="gene designation" value="GRIPAP1"/>
</dbReference>
<dbReference type="HPA" id="ENSG00000068400">
    <property type="expression patterns" value="Low tissue specificity"/>
</dbReference>
<dbReference type="MalaCards" id="GRIPAP1"/>
<dbReference type="MIM" id="300408">
    <property type="type" value="gene"/>
</dbReference>
<dbReference type="neXtProt" id="NX_Q4V328"/>
<dbReference type="OpenTargets" id="ENSG00000068400"/>
<dbReference type="PharmGKB" id="PA38650"/>
<dbReference type="VEuPathDB" id="HostDB:ENSG00000068400"/>
<dbReference type="eggNOG" id="ENOG502QTUD">
    <property type="taxonomic scope" value="Eukaryota"/>
</dbReference>
<dbReference type="GeneTree" id="ENSGT00720000108868"/>
<dbReference type="HOGENOM" id="CLU_019728_1_0_1"/>
<dbReference type="InParanoid" id="Q4V328"/>
<dbReference type="OMA" id="FLLVQEQ"/>
<dbReference type="OrthoDB" id="6269447at2759"/>
<dbReference type="PAN-GO" id="Q4V328">
    <property type="GO annotations" value="7 GO annotations based on evolutionary models"/>
</dbReference>
<dbReference type="PhylomeDB" id="Q4V328"/>
<dbReference type="TreeFam" id="TF329006"/>
<dbReference type="PathwayCommons" id="Q4V328"/>
<dbReference type="SignaLink" id="Q4V328"/>
<dbReference type="SIGNOR" id="Q4V328"/>
<dbReference type="BioGRID-ORCS" id="56850">
    <property type="hits" value="12 hits in 785 CRISPR screens"/>
</dbReference>
<dbReference type="ChiTaRS" id="GRIPAP1">
    <property type="organism name" value="human"/>
</dbReference>
<dbReference type="GeneWiki" id="GRIPAP1"/>
<dbReference type="GenomeRNAi" id="56850"/>
<dbReference type="Pharos" id="Q4V328">
    <property type="development level" value="Tbio"/>
</dbReference>
<dbReference type="PRO" id="PR:Q4V328"/>
<dbReference type="Proteomes" id="UP000005640">
    <property type="component" value="Chromosome X"/>
</dbReference>
<dbReference type="RNAct" id="Q4V328">
    <property type="molecule type" value="protein"/>
</dbReference>
<dbReference type="Bgee" id="ENSG00000068400">
    <property type="expression patterns" value="Expressed in right hemisphere of cerebellum and 172 other cell types or tissues"/>
</dbReference>
<dbReference type="ExpressionAtlas" id="Q4V328">
    <property type="expression patterns" value="baseline and differential"/>
</dbReference>
<dbReference type="GO" id="GO:0030424">
    <property type="term" value="C:axon"/>
    <property type="evidence" value="ECO:0007669"/>
    <property type="project" value="UniProtKB-SubCell"/>
</dbReference>
<dbReference type="GO" id="GO:0072562">
    <property type="term" value="C:blood microparticle"/>
    <property type="evidence" value="ECO:0007005"/>
    <property type="project" value="UniProtKB"/>
</dbReference>
<dbReference type="GO" id="GO:0005829">
    <property type="term" value="C:cytosol"/>
    <property type="evidence" value="ECO:0000314"/>
    <property type="project" value="HPA"/>
</dbReference>
<dbReference type="GO" id="GO:0030425">
    <property type="term" value="C:dendrite"/>
    <property type="evidence" value="ECO:0007669"/>
    <property type="project" value="UniProtKB-SubCell"/>
</dbReference>
<dbReference type="GO" id="GO:0098998">
    <property type="term" value="C:extrinsic component of postsynaptic early endosome membrane"/>
    <property type="evidence" value="ECO:0000318"/>
    <property type="project" value="GO_Central"/>
</dbReference>
<dbReference type="GO" id="GO:0098978">
    <property type="term" value="C:glutamatergic synapse"/>
    <property type="evidence" value="ECO:0000318"/>
    <property type="project" value="GO_Central"/>
</dbReference>
<dbReference type="GO" id="GO:0043231">
    <property type="term" value="C:intracellular membrane-bounded organelle"/>
    <property type="evidence" value="ECO:0000314"/>
    <property type="project" value="HPA"/>
</dbReference>
<dbReference type="GO" id="GO:0043025">
    <property type="term" value="C:neuronal cell body"/>
    <property type="evidence" value="ECO:0007669"/>
    <property type="project" value="Ensembl"/>
</dbReference>
<dbReference type="GO" id="GO:0005654">
    <property type="term" value="C:nucleoplasm"/>
    <property type="evidence" value="ECO:0000314"/>
    <property type="project" value="HPA"/>
</dbReference>
<dbReference type="GO" id="GO:0042734">
    <property type="term" value="C:presynaptic membrane"/>
    <property type="evidence" value="ECO:0007669"/>
    <property type="project" value="Ensembl"/>
</dbReference>
<dbReference type="GO" id="GO:0055038">
    <property type="term" value="C:recycling endosome membrane"/>
    <property type="evidence" value="ECO:0007669"/>
    <property type="project" value="UniProtKB-SubCell"/>
</dbReference>
<dbReference type="GO" id="GO:0005085">
    <property type="term" value="F:guanyl-nucleotide exchange factor activity"/>
    <property type="evidence" value="ECO:0007669"/>
    <property type="project" value="Ensembl"/>
</dbReference>
<dbReference type="GO" id="GO:0042802">
    <property type="term" value="F:identical protein binding"/>
    <property type="evidence" value="ECO:0000353"/>
    <property type="project" value="IntAct"/>
</dbReference>
<dbReference type="GO" id="GO:0035255">
    <property type="term" value="F:ionotropic glutamate receptor binding"/>
    <property type="evidence" value="ECO:0007669"/>
    <property type="project" value="Ensembl"/>
</dbReference>
<dbReference type="GO" id="GO:1903910">
    <property type="term" value="P:negative regulation of receptor clustering"/>
    <property type="evidence" value="ECO:0007669"/>
    <property type="project" value="Ensembl"/>
</dbReference>
<dbReference type="GO" id="GO:0015031">
    <property type="term" value="P:protein transport"/>
    <property type="evidence" value="ECO:0007669"/>
    <property type="project" value="UniProtKB-KW"/>
</dbReference>
<dbReference type="GO" id="GO:0099152">
    <property type="term" value="P:regulation of neurotransmitter receptor transport, endosome to postsynaptic membrane"/>
    <property type="evidence" value="ECO:0000318"/>
    <property type="project" value="GO_Central"/>
</dbReference>
<dbReference type="GO" id="GO:0099158">
    <property type="term" value="P:regulation of recycling endosome localization within postsynapse"/>
    <property type="evidence" value="ECO:0000318"/>
    <property type="project" value="GO_Central"/>
</dbReference>
<dbReference type="InterPro" id="IPR026204">
    <property type="entry name" value="GRIPAP1"/>
</dbReference>
<dbReference type="PANTHER" id="PTHR18978">
    <property type="entry name" value="GRIP-1 ASSOCIATED PROTEIN 1"/>
    <property type="match status" value="1"/>
</dbReference>
<dbReference type="PANTHER" id="PTHR18978:SF1">
    <property type="entry name" value="GRIP1-ASSOCIATED PROTEIN 1"/>
    <property type="match status" value="1"/>
</dbReference>